<organism>
    <name type="scientific">Penicillium citrinum</name>
    <dbReference type="NCBI Taxonomy" id="5077"/>
    <lineage>
        <taxon>Eukaryota</taxon>
        <taxon>Fungi</taxon>
        <taxon>Dikarya</taxon>
        <taxon>Ascomycota</taxon>
        <taxon>Pezizomycotina</taxon>
        <taxon>Eurotiomycetes</taxon>
        <taxon>Eurotiomycetidae</taxon>
        <taxon>Eurotiales</taxon>
        <taxon>Aspergillaceae</taxon>
        <taxon>Penicillium</taxon>
    </lineage>
</organism>
<keyword id="KW-0020">Allergen</keyword>
<keyword id="KW-0067">ATP-binding</keyword>
<keyword id="KW-0143">Chaperone</keyword>
<keyword id="KW-0547">Nucleotide-binding</keyword>
<keyword id="KW-0346">Stress response</keyword>
<evidence type="ECO:0000256" key="1">
    <source>
        <dbReference type="SAM" id="MobiDB-lite"/>
    </source>
</evidence>
<evidence type="ECO:0000305" key="2"/>
<sequence length="503" mass="55126">AYLGGTVNNAVITVPAYFNDSQRQATKDAGLIAGLNVLRIINEPTAAAIAYGLDKKTEGERNVLIFDLGGGTFDVSLLTIEEGIFEVKSTAGDTHLGGEDFDNRLVNHFVNEFKRKHKKDLTTNARALRRLRTACERAKRTLSSAAQTSIEIDSLFEGIDFYTSITRARFEELCQDLFRGTMEPVERVLRDAKIDKSSVHEIVLVGGSTRIPKIQKLVSDFFNKDANKSINPDEAVAYGAAVQAAILSGDTSSKSTNEILLLDVAPLSLGIETAGGVMTPLIKRNTTIPTKKSETFSTYSDNQPGVLIQVFEGERARTKDNNLLGKFELTGIPPAPRGVPQIEVTFDLDANGIMNVSASEKGTGKSNKITITNDKGRLSKEEIERMLAEAEKYKAEDEAEASRIQAKNGLESYAYSLKNTITEGKLQMSDDDKKKIEDKISEIISWLDNNQTAEKDEYESQQKELEAIANPIMQAAYGAAGGAPPQQRADGETEEKKDEEELD</sequence>
<gene>
    <name type="primary">HSP70</name>
</gene>
<dbReference type="EMBL" id="U64207">
    <property type="protein sequence ID" value="AAB06397.1"/>
    <property type="molecule type" value="mRNA"/>
</dbReference>
<dbReference type="SMR" id="Q92260"/>
<dbReference type="Allergome" id="3402">
    <property type="allergen name" value="Pen c 19.0101"/>
</dbReference>
<dbReference type="Allergome" id="520">
    <property type="allergen name" value="Pen c 19"/>
</dbReference>
<dbReference type="GO" id="GO:0005524">
    <property type="term" value="F:ATP binding"/>
    <property type="evidence" value="ECO:0007669"/>
    <property type="project" value="UniProtKB-KW"/>
</dbReference>
<dbReference type="GO" id="GO:0140662">
    <property type="term" value="F:ATP-dependent protein folding chaperone"/>
    <property type="evidence" value="ECO:0007669"/>
    <property type="project" value="InterPro"/>
</dbReference>
<dbReference type="FunFam" id="3.30.420.40:FF:000545">
    <property type="entry name" value="Endoplasmic reticulum chaperone BiP"/>
    <property type="match status" value="1"/>
</dbReference>
<dbReference type="FunFam" id="2.60.34.10:FF:000002">
    <property type="entry name" value="Heat shock 70 kDa"/>
    <property type="match status" value="1"/>
</dbReference>
<dbReference type="FunFam" id="3.90.640.10:FF:000002">
    <property type="entry name" value="Heat shock 70 kDa"/>
    <property type="match status" value="1"/>
</dbReference>
<dbReference type="FunFam" id="3.30.420.40:FF:000172">
    <property type="entry name" value="Heat shock 70 kDa protein"/>
    <property type="match status" value="2"/>
</dbReference>
<dbReference type="FunFam" id="3.30.420.40:FF:000028">
    <property type="entry name" value="heat shock 70 kDa protein-like"/>
    <property type="match status" value="1"/>
</dbReference>
<dbReference type="FunFam" id="1.20.1270.10:FF:000016">
    <property type="entry name" value="Heat shock protein 70"/>
    <property type="match status" value="1"/>
</dbReference>
<dbReference type="Gene3D" id="1.20.1270.10">
    <property type="match status" value="1"/>
</dbReference>
<dbReference type="Gene3D" id="3.30.420.40">
    <property type="match status" value="2"/>
</dbReference>
<dbReference type="Gene3D" id="3.90.640.10">
    <property type="entry name" value="Actin, Chain A, domain 4"/>
    <property type="match status" value="1"/>
</dbReference>
<dbReference type="Gene3D" id="2.60.34.10">
    <property type="entry name" value="Substrate Binding Domain Of DNAk, Chain A, domain 1"/>
    <property type="match status" value="1"/>
</dbReference>
<dbReference type="InterPro" id="IPR043129">
    <property type="entry name" value="ATPase_NBD"/>
</dbReference>
<dbReference type="InterPro" id="IPR018181">
    <property type="entry name" value="Heat_shock_70_CS"/>
</dbReference>
<dbReference type="InterPro" id="IPR029048">
    <property type="entry name" value="HSP70_C_sf"/>
</dbReference>
<dbReference type="InterPro" id="IPR029047">
    <property type="entry name" value="HSP70_peptide-bd_sf"/>
</dbReference>
<dbReference type="InterPro" id="IPR013126">
    <property type="entry name" value="Hsp_70_fam"/>
</dbReference>
<dbReference type="PANTHER" id="PTHR19375">
    <property type="entry name" value="HEAT SHOCK PROTEIN 70KDA"/>
    <property type="match status" value="1"/>
</dbReference>
<dbReference type="Pfam" id="PF00012">
    <property type="entry name" value="HSP70"/>
    <property type="match status" value="1"/>
</dbReference>
<dbReference type="PRINTS" id="PR00301">
    <property type="entry name" value="HEATSHOCK70"/>
</dbReference>
<dbReference type="SUPFAM" id="SSF53067">
    <property type="entry name" value="Actin-like ATPase domain"/>
    <property type="match status" value="2"/>
</dbReference>
<dbReference type="SUPFAM" id="SSF100934">
    <property type="entry name" value="Heat shock protein 70kD (HSP70), C-terminal subdomain"/>
    <property type="match status" value="1"/>
</dbReference>
<dbReference type="SUPFAM" id="SSF100920">
    <property type="entry name" value="Heat shock protein 70kD (HSP70), peptide-binding domain"/>
    <property type="match status" value="1"/>
</dbReference>
<dbReference type="PROSITE" id="PS00329">
    <property type="entry name" value="HSP70_2"/>
    <property type="match status" value="1"/>
</dbReference>
<dbReference type="PROSITE" id="PS01036">
    <property type="entry name" value="HSP70_3"/>
    <property type="match status" value="1"/>
</dbReference>
<reference key="1">
    <citation type="journal article" date="1997" name="Clin. Exp. Allergy">
        <title>Molecular cloning and expression of a Penicillium citrinum allergen with sequence homology and antigenic crossreactivity to a hsp 70 human heat shock protein.</title>
        <authorList>
            <person name="Shen H.D."/>
            <person name="Au L.C."/>
            <person name="Lin W.L."/>
            <person name="Liaw S.F."/>
            <person name="Tsai J.J."/>
            <person name="Han S.H."/>
        </authorList>
    </citation>
    <scope>NUCLEOTIDE SEQUENCE [MRNA]</scope>
</reference>
<accession>Q92260</accession>
<feature type="chain" id="PRO_0000078375" description="Heat shock 70 kDa protein">
    <location>
        <begin position="1" status="less than"/>
        <end position="503"/>
    </location>
</feature>
<feature type="region of interest" description="Disordered" evidence="1">
    <location>
        <begin position="475"/>
        <end position="503"/>
    </location>
</feature>
<feature type="compositionally biased region" description="Low complexity" evidence="1">
    <location>
        <begin position="475"/>
        <end position="488"/>
    </location>
</feature>
<feature type="non-terminal residue">
    <location>
        <position position="1"/>
    </location>
</feature>
<protein>
    <recommendedName>
        <fullName>Heat shock 70 kDa protein</fullName>
    </recommendedName>
    <allergenName>Pen c 19</allergenName>
</protein>
<name>HSP70_PENCI</name>
<proteinExistence type="evidence at protein level"/>
<comment type="allergen">
    <text>Causes an allergic reaction in human.</text>
</comment>
<comment type="similarity">
    <text evidence="2">Belongs to the heat shock protein 70 family.</text>
</comment>